<keyword id="KW-0004">4Fe-4S</keyword>
<keyword id="KW-0963">Cytoplasm</keyword>
<keyword id="KW-0408">Iron</keyword>
<keyword id="KW-0411">Iron-sulfur</keyword>
<keyword id="KW-0479">Metal-binding</keyword>
<keyword id="KW-1185">Reference proteome</keyword>
<keyword id="KW-0949">S-adenosyl-L-methionine</keyword>
<keyword id="KW-0808">Transferase</keyword>
<dbReference type="EC" id="2.8.1.8" evidence="1"/>
<dbReference type="EMBL" id="AE001273">
    <property type="protein sequence ID" value="AAC68160.1"/>
    <property type="molecule type" value="Genomic_DNA"/>
</dbReference>
<dbReference type="PIR" id="F71500">
    <property type="entry name" value="F71500"/>
</dbReference>
<dbReference type="RefSeq" id="NP_220073.1">
    <property type="nucleotide sequence ID" value="NC_000117.1"/>
</dbReference>
<dbReference type="RefSeq" id="WP_010725252.1">
    <property type="nucleotide sequence ID" value="NC_000117.1"/>
</dbReference>
<dbReference type="SMR" id="O84562"/>
<dbReference type="FunCoup" id="O84562">
    <property type="interactions" value="243"/>
</dbReference>
<dbReference type="STRING" id="272561.CT_558"/>
<dbReference type="EnsemblBacteria" id="AAC68160">
    <property type="protein sequence ID" value="AAC68160"/>
    <property type="gene ID" value="CT_558"/>
</dbReference>
<dbReference type="GeneID" id="884334"/>
<dbReference type="KEGG" id="ctr:CT_558"/>
<dbReference type="PATRIC" id="fig|272561.5.peg.609"/>
<dbReference type="HOGENOM" id="CLU_033144_2_1_0"/>
<dbReference type="InParanoid" id="O84562"/>
<dbReference type="OrthoDB" id="9787898at2"/>
<dbReference type="UniPathway" id="UPA00538">
    <property type="reaction ID" value="UER00593"/>
</dbReference>
<dbReference type="Proteomes" id="UP000000431">
    <property type="component" value="Chromosome"/>
</dbReference>
<dbReference type="GO" id="GO:0005737">
    <property type="term" value="C:cytoplasm"/>
    <property type="evidence" value="ECO:0007669"/>
    <property type="project" value="UniProtKB-SubCell"/>
</dbReference>
<dbReference type="GO" id="GO:0051539">
    <property type="term" value="F:4 iron, 4 sulfur cluster binding"/>
    <property type="evidence" value="ECO:0007669"/>
    <property type="project" value="UniProtKB-UniRule"/>
</dbReference>
<dbReference type="GO" id="GO:0016992">
    <property type="term" value="F:lipoate synthase activity"/>
    <property type="evidence" value="ECO:0007669"/>
    <property type="project" value="UniProtKB-UniRule"/>
</dbReference>
<dbReference type="GO" id="GO:0046872">
    <property type="term" value="F:metal ion binding"/>
    <property type="evidence" value="ECO:0007669"/>
    <property type="project" value="UniProtKB-KW"/>
</dbReference>
<dbReference type="CDD" id="cd01335">
    <property type="entry name" value="Radical_SAM"/>
    <property type="match status" value="1"/>
</dbReference>
<dbReference type="FunFam" id="3.20.20.70:FF:000186">
    <property type="entry name" value="Lipoyl synthase"/>
    <property type="match status" value="1"/>
</dbReference>
<dbReference type="Gene3D" id="3.20.20.70">
    <property type="entry name" value="Aldolase class I"/>
    <property type="match status" value="1"/>
</dbReference>
<dbReference type="HAMAP" id="MF_00206">
    <property type="entry name" value="Lipoyl_synth"/>
    <property type="match status" value="1"/>
</dbReference>
<dbReference type="InterPro" id="IPR013785">
    <property type="entry name" value="Aldolase_TIM"/>
</dbReference>
<dbReference type="InterPro" id="IPR006638">
    <property type="entry name" value="Elp3/MiaA/NifB-like_rSAM"/>
</dbReference>
<dbReference type="InterPro" id="IPR031691">
    <property type="entry name" value="LIAS_N"/>
</dbReference>
<dbReference type="InterPro" id="IPR003698">
    <property type="entry name" value="Lipoyl_synth"/>
</dbReference>
<dbReference type="InterPro" id="IPR007197">
    <property type="entry name" value="rSAM"/>
</dbReference>
<dbReference type="NCBIfam" id="TIGR00510">
    <property type="entry name" value="lipA"/>
    <property type="match status" value="1"/>
</dbReference>
<dbReference type="NCBIfam" id="NF004019">
    <property type="entry name" value="PRK05481.1"/>
    <property type="match status" value="1"/>
</dbReference>
<dbReference type="NCBIfam" id="NF009544">
    <property type="entry name" value="PRK12928.1"/>
    <property type="match status" value="1"/>
</dbReference>
<dbReference type="PANTHER" id="PTHR10949">
    <property type="entry name" value="LIPOYL SYNTHASE"/>
    <property type="match status" value="1"/>
</dbReference>
<dbReference type="PANTHER" id="PTHR10949:SF0">
    <property type="entry name" value="LIPOYL SYNTHASE, MITOCHONDRIAL"/>
    <property type="match status" value="1"/>
</dbReference>
<dbReference type="Pfam" id="PF16881">
    <property type="entry name" value="LIAS_N"/>
    <property type="match status" value="1"/>
</dbReference>
<dbReference type="Pfam" id="PF04055">
    <property type="entry name" value="Radical_SAM"/>
    <property type="match status" value="1"/>
</dbReference>
<dbReference type="PIRSF" id="PIRSF005963">
    <property type="entry name" value="Lipoyl_synth"/>
    <property type="match status" value="1"/>
</dbReference>
<dbReference type="SFLD" id="SFLDF00271">
    <property type="entry name" value="lipoyl_synthase"/>
    <property type="match status" value="1"/>
</dbReference>
<dbReference type="SFLD" id="SFLDG01058">
    <property type="entry name" value="lipoyl_synthase_like"/>
    <property type="match status" value="1"/>
</dbReference>
<dbReference type="SMART" id="SM00729">
    <property type="entry name" value="Elp3"/>
    <property type="match status" value="1"/>
</dbReference>
<dbReference type="SUPFAM" id="SSF102114">
    <property type="entry name" value="Radical SAM enzymes"/>
    <property type="match status" value="1"/>
</dbReference>
<dbReference type="PROSITE" id="PS51918">
    <property type="entry name" value="RADICAL_SAM"/>
    <property type="match status" value="1"/>
</dbReference>
<organism>
    <name type="scientific">Chlamydia trachomatis serovar D (strain ATCC VR-885 / DSM 19411 / UW-3/Cx)</name>
    <dbReference type="NCBI Taxonomy" id="272561"/>
    <lineage>
        <taxon>Bacteria</taxon>
        <taxon>Pseudomonadati</taxon>
        <taxon>Chlamydiota</taxon>
        <taxon>Chlamydiia</taxon>
        <taxon>Chlamydiales</taxon>
        <taxon>Chlamydiaceae</taxon>
        <taxon>Chlamydia/Chlamydophila group</taxon>
        <taxon>Chlamydia</taxon>
    </lineage>
</organism>
<feature type="chain" id="PRO_0000102306" description="Lipoyl synthase">
    <location>
        <begin position="1"/>
        <end position="311"/>
    </location>
</feature>
<feature type="domain" description="Radical SAM core" evidence="2">
    <location>
        <begin position="59"/>
        <end position="276"/>
    </location>
</feature>
<feature type="binding site" evidence="1">
    <location>
        <position position="47"/>
    </location>
    <ligand>
        <name>[4Fe-4S] cluster</name>
        <dbReference type="ChEBI" id="CHEBI:49883"/>
        <label>1</label>
    </ligand>
</feature>
<feature type="binding site" evidence="1">
    <location>
        <position position="52"/>
    </location>
    <ligand>
        <name>[4Fe-4S] cluster</name>
        <dbReference type="ChEBI" id="CHEBI:49883"/>
        <label>1</label>
    </ligand>
</feature>
<feature type="binding site" evidence="1">
    <location>
        <position position="58"/>
    </location>
    <ligand>
        <name>[4Fe-4S] cluster</name>
        <dbReference type="ChEBI" id="CHEBI:49883"/>
        <label>1</label>
    </ligand>
</feature>
<feature type="binding site" evidence="1">
    <location>
        <position position="73"/>
    </location>
    <ligand>
        <name>[4Fe-4S] cluster</name>
        <dbReference type="ChEBI" id="CHEBI:49883"/>
        <label>2</label>
        <note>4Fe-4S-S-AdoMet</note>
    </ligand>
</feature>
<feature type="binding site" evidence="1">
    <location>
        <position position="77"/>
    </location>
    <ligand>
        <name>[4Fe-4S] cluster</name>
        <dbReference type="ChEBI" id="CHEBI:49883"/>
        <label>2</label>
        <note>4Fe-4S-S-AdoMet</note>
    </ligand>
</feature>
<feature type="binding site" evidence="1">
    <location>
        <position position="80"/>
    </location>
    <ligand>
        <name>[4Fe-4S] cluster</name>
        <dbReference type="ChEBI" id="CHEBI:49883"/>
        <label>2</label>
        <note>4Fe-4S-S-AdoMet</note>
    </ligand>
</feature>
<feature type="binding site" evidence="1">
    <location>
        <position position="286"/>
    </location>
    <ligand>
        <name>[4Fe-4S] cluster</name>
        <dbReference type="ChEBI" id="CHEBI:49883"/>
        <label>1</label>
    </ligand>
</feature>
<proteinExistence type="inferred from homology"/>
<accession>O84562</accession>
<evidence type="ECO:0000255" key="1">
    <source>
        <dbReference type="HAMAP-Rule" id="MF_00206"/>
    </source>
</evidence>
<evidence type="ECO:0000255" key="2">
    <source>
        <dbReference type="PROSITE-ProRule" id="PRU01266"/>
    </source>
</evidence>
<protein>
    <recommendedName>
        <fullName evidence="1">Lipoyl synthase</fullName>
        <ecNumber evidence="1">2.8.1.8</ecNumber>
    </recommendedName>
    <alternativeName>
        <fullName evidence="1">Lip-syn</fullName>
        <shortName evidence="1">LS</shortName>
    </alternativeName>
    <alternativeName>
        <fullName evidence="1">Lipoate synthase</fullName>
    </alternativeName>
    <alternativeName>
        <fullName evidence="1">Lipoic acid synthase</fullName>
    </alternativeName>
    <alternativeName>
        <fullName evidence="1">Sulfur insertion protein LipA</fullName>
    </alternativeName>
</protein>
<name>LIPA_CHLTR</name>
<sequence>MTDSESPIPKKSIPARFPKWLRQKLPLGRVFAQTDNTIKNKGLPTVCEEASCPNRTHCWSRHTATYLALGDACTRRCGFCDIDFTRNPLPPDPEEGAKIAESAKALGLKHIVITMVSRDDLEDGGASALVHIIETLHTELPTATIEVLASDFEGNIAALHHLLDAHIAIYNHNVETVERLTPFVRHKATYRRSLMMLENAAKYLPNLMTKSGIMVGLGEQESEVKQTLKDLADHGVKIVTIGQYLRPSRRHIPVKSYVSPETFDYYRSVGESLGLFIYAGPFVRSSFNADSVFEAMRQRETSTSALLPNKD</sequence>
<gene>
    <name evidence="1" type="primary">lipA</name>
    <name type="ordered locus">CT_558</name>
</gene>
<reference key="1">
    <citation type="journal article" date="1998" name="Science">
        <title>Genome sequence of an obligate intracellular pathogen of humans: Chlamydia trachomatis.</title>
        <authorList>
            <person name="Stephens R.S."/>
            <person name="Kalman S."/>
            <person name="Lammel C.J."/>
            <person name="Fan J."/>
            <person name="Marathe R."/>
            <person name="Aravind L."/>
            <person name="Mitchell W.P."/>
            <person name="Olinger L."/>
            <person name="Tatusov R.L."/>
            <person name="Zhao Q."/>
            <person name="Koonin E.V."/>
            <person name="Davis R.W."/>
        </authorList>
    </citation>
    <scope>NUCLEOTIDE SEQUENCE [LARGE SCALE GENOMIC DNA]</scope>
    <source>
        <strain>ATCC VR-885 / DSM 19411 / UW-3/Cx</strain>
    </source>
</reference>
<comment type="function">
    <text evidence="1">Catalyzes the radical-mediated insertion of two sulfur atoms into the C-6 and C-8 positions of the octanoyl moiety bound to the lipoyl domains of lipoate-dependent enzymes, thereby converting the octanoylated domains into lipoylated derivatives.</text>
</comment>
<comment type="catalytic activity">
    <reaction evidence="1">
        <text>[[Fe-S] cluster scaffold protein carrying a second [4Fe-4S](2+) cluster] + N(6)-octanoyl-L-lysyl-[protein] + 2 oxidized [2Fe-2S]-[ferredoxin] + 2 S-adenosyl-L-methionine + 4 H(+) = [[Fe-S] cluster scaffold protein] + N(6)-[(R)-dihydrolipoyl]-L-lysyl-[protein] + 4 Fe(3+) + 2 hydrogen sulfide + 2 5'-deoxyadenosine + 2 L-methionine + 2 reduced [2Fe-2S]-[ferredoxin]</text>
        <dbReference type="Rhea" id="RHEA:16585"/>
        <dbReference type="Rhea" id="RHEA-COMP:9928"/>
        <dbReference type="Rhea" id="RHEA-COMP:10000"/>
        <dbReference type="Rhea" id="RHEA-COMP:10001"/>
        <dbReference type="Rhea" id="RHEA-COMP:10475"/>
        <dbReference type="Rhea" id="RHEA-COMP:14568"/>
        <dbReference type="Rhea" id="RHEA-COMP:14569"/>
        <dbReference type="ChEBI" id="CHEBI:15378"/>
        <dbReference type="ChEBI" id="CHEBI:17319"/>
        <dbReference type="ChEBI" id="CHEBI:29034"/>
        <dbReference type="ChEBI" id="CHEBI:29919"/>
        <dbReference type="ChEBI" id="CHEBI:33722"/>
        <dbReference type="ChEBI" id="CHEBI:33737"/>
        <dbReference type="ChEBI" id="CHEBI:33738"/>
        <dbReference type="ChEBI" id="CHEBI:57844"/>
        <dbReference type="ChEBI" id="CHEBI:59789"/>
        <dbReference type="ChEBI" id="CHEBI:78809"/>
        <dbReference type="ChEBI" id="CHEBI:83100"/>
        <dbReference type="EC" id="2.8.1.8"/>
    </reaction>
</comment>
<comment type="cofactor">
    <cofactor evidence="1">
        <name>[4Fe-4S] cluster</name>
        <dbReference type="ChEBI" id="CHEBI:49883"/>
    </cofactor>
    <text evidence="1">Binds 2 [4Fe-4S] clusters per subunit. One cluster is coordinated with 3 cysteines and an exchangeable S-adenosyl-L-methionine.</text>
</comment>
<comment type="pathway">
    <text evidence="1">Protein modification; protein lipoylation via endogenous pathway; protein N(6)-(lipoyl)lysine from octanoyl-[acyl-carrier-protein]: step 2/2.</text>
</comment>
<comment type="subcellular location">
    <subcellularLocation>
        <location evidence="1">Cytoplasm</location>
    </subcellularLocation>
</comment>
<comment type="similarity">
    <text evidence="1">Belongs to the radical SAM superfamily. Lipoyl synthase family.</text>
</comment>